<evidence type="ECO:0000255" key="1">
    <source>
        <dbReference type="HAMAP-Rule" id="MF_00038"/>
    </source>
</evidence>
<sequence>MLVWLAEYLTQFESAFNVFSYLTLRAILSVLTALVLSLWLGPTLIRRLQRLQIGQTVRDDGPESHLVKSGTPTMGGVLILAAVLGSSLLWADLDNRYVWVVLLVTTGFGIVGFVDDYRKVVRKDPKGLIAKWKYFWQSVIASVAAVYLYWSSTQGAETALLVPFFKDVMPQLGMLYMLMAYFVIVGTSNAVNLTDGLDGLAIMPTIMVAAALGIFAYVSGNVNFAEYLQIPYLPLTAELLVVCTAIVGAGLGFLWFNTYPALVFMGDVGSLALGAALGIIAILVRQELVLFIMGGVFVMETLSVMLQVGSYKLRGKRVFRMAPIHHHYELKGWPEPRVIVRFWILSLIFVLIGLATLKLR</sequence>
<reference key="1">
    <citation type="journal article" date="2004" name="Proc. Natl. Acad. Sci. U.S.A.">
        <title>Genome sequence of the deep-sea gamma-proteobacterium Idiomarina loihiensis reveals amino acid fermentation as a source of carbon and energy.</title>
        <authorList>
            <person name="Hou S."/>
            <person name="Saw J.H."/>
            <person name="Lee K.S."/>
            <person name="Freitas T.A."/>
            <person name="Belisle C."/>
            <person name="Kawarabayasi Y."/>
            <person name="Donachie S.P."/>
            <person name="Pikina A."/>
            <person name="Galperin M.Y."/>
            <person name="Koonin E.V."/>
            <person name="Makarova K.S."/>
            <person name="Omelchenko M.V."/>
            <person name="Sorokin A."/>
            <person name="Wolf Y.I."/>
            <person name="Li Q.X."/>
            <person name="Keum Y.S."/>
            <person name="Campbell S."/>
            <person name="Denery J."/>
            <person name="Aizawa S."/>
            <person name="Shibata S."/>
            <person name="Malahoff A."/>
            <person name="Alam M."/>
        </authorList>
    </citation>
    <scope>NUCLEOTIDE SEQUENCE [LARGE SCALE GENOMIC DNA]</scope>
    <source>
        <strain>ATCC BAA-735 / DSM 15497 / L2-TR</strain>
    </source>
</reference>
<comment type="function">
    <text evidence="1">Catalyzes the initial step of the lipid cycle reactions in the biosynthesis of the cell wall peptidoglycan: transfers peptidoglycan precursor phospho-MurNAc-pentapeptide from UDP-MurNAc-pentapeptide onto the lipid carrier undecaprenyl phosphate, yielding undecaprenyl-pyrophosphoryl-MurNAc-pentapeptide, known as lipid I.</text>
</comment>
<comment type="catalytic activity">
    <reaction evidence="1">
        <text>UDP-N-acetyl-alpha-D-muramoyl-L-alanyl-gamma-D-glutamyl-meso-2,6-diaminopimeloyl-D-alanyl-D-alanine + di-trans,octa-cis-undecaprenyl phosphate = di-trans,octa-cis-undecaprenyl diphospho-N-acetyl-alpha-D-muramoyl-L-alanyl-D-glutamyl-meso-2,6-diaminopimeloyl-D-alanyl-D-alanine + UMP</text>
        <dbReference type="Rhea" id="RHEA:28386"/>
        <dbReference type="ChEBI" id="CHEBI:57865"/>
        <dbReference type="ChEBI" id="CHEBI:60392"/>
        <dbReference type="ChEBI" id="CHEBI:61386"/>
        <dbReference type="ChEBI" id="CHEBI:61387"/>
        <dbReference type="EC" id="2.7.8.13"/>
    </reaction>
</comment>
<comment type="cofactor">
    <cofactor evidence="1">
        <name>Mg(2+)</name>
        <dbReference type="ChEBI" id="CHEBI:18420"/>
    </cofactor>
</comment>
<comment type="pathway">
    <text evidence="1">Cell wall biogenesis; peptidoglycan biosynthesis.</text>
</comment>
<comment type="subcellular location">
    <subcellularLocation>
        <location evidence="1">Cell inner membrane</location>
        <topology evidence="1">Multi-pass membrane protein</topology>
    </subcellularLocation>
</comment>
<comment type="similarity">
    <text evidence="1">Belongs to the glycosyltransferase 4 family. MraY subfamily.</text>
</comment>
<organism>
    <name type="scientific">Idiomarina loihiensis (strain ATCC BAA-735 / DSM 15497 / L2-TR)</name>
    <dbReference type="NCBI Taxonomy" id="283942"/>
    <lineage>
        <taxon>Bacteria</taxon>
        <taxon>Pseudomonadati</taxon>
        <taxon>Pseudomonadota</taxon>
        <taxon>Gammaproteobacteria</taxon>
        <taxon>Alteromonadales</taxon>
        <taxon>Idiomarinaceae</taxon>
        <taxon>Idiomarina</taxon>
    </lineage>
</organism>
<feature type="chain" id="PRO_0000108838" description="Phospho-N-acetylmuramoyl-pentapeptide-transferase">
    <location>
        <begin position="1"/>
        <end position="360"/>
    </location>
</feature>
<feature type="transmembrane region" description="Helical" evidence="1">
    <location>
        <begin position="25"/>
        <end position="45"/>
    </location>
</feature>
<feature type="transmembrane region" description="Helical" evidence="1">
    <location>
        <begin position="73"/>
        <end position="93"/>
    </location>
</feature>
<feature type="transmembrane region" description="Helical" evidence="1">
    <location>
        <begin position="97"/>
        <end position="117"/>
    </location>
</feature>
<feature type="transmembrane region" description="Helical" evidence="1">
    <location>
        <begin position="128"/>
        <end position="148"/>
    </location>
</feature>
<feature type="transmembrane region" description="Helical" evidence="1">
    <location>
        <begin position="168"/>
        <end position="188"/>
    </location>
</feature>
<feature type="transmembrane region" description="Helical" evidence="1">
    <location>
        <begin position="199"/>
        <end position="219"/>
    </location>
</feature>
<feature type="transmembrane region" description="Helical" evidence="1">
    <location>
        <begin position="236"/>
        <end position="256"/>
    </location>
</feature>
<feature type="transmembrane region" description="Helical" evidence="1">
    <location>
        <begin position="262"/>
        <end position="282"/>
    </location>
</feature>
<feature type="transmembrane region" description="Helical" evidence="1">
    <location>
        <begin position="288"/>
        <end position="308"/>
    </location>
</feature>
<feature type="transmembrane region" description="Helical" evidence="1">
    <location>
        <begin position="338"/>
        <end position="358"/>
    </location>
</feature>
<protein>
    <recommendedName>
        <fullName evidence="1">Phospho-N-acetylmuramoyl-pentapeptide-transferase</fullName>
        <ecNumber evidence="1">2.7.8.13</ecNumber>
    </recommendedName>
    <alternativeName>
        <fullName evidence="1">UDP-MurNAc-pentapeptide phosphotransferase</fullName>
    </alternativeName>
</protein>
<proteinExistence type="inferred from homology"/>
<accession>Q5R0M4</accession>
<dbReference type="EC" id="2.7.8.13" evidence="1"/>
<dbReference type="EMBL" id="AE017340">
    <property type="protein sequence ID" value="AAV81276.1"/>
    <property type="molecule type" value="Genomic_DNA"/>
</dbReference>
<dbReference type="RefSeq" id="WP_011233694.1">
    <property type="nucleotide sequence ID" value="NC_006512.1"/>
</dbReference>
<dbReference type="SMR" id="Q5R0M4"/>
<dbReference type="STRING" id="283942.IL0433"/>
<dbReference type="GeneID" id="41335585"/>
<dbReference type="KEGG" id="ilo:IL0433"/>
<dbReference type="eggNOG" id="COG0472">
    <property type="taxonomic scope" value="Bacteria"/>
</dbReference>
<dbReference type="HOGENOM" id="CLU_023982_0_0_6"/>
<dbReference type="OrthoDB" id="9805475at2"/>
<dbReference type="UniPathway" id="UPA00219"/>
<dbReference type="Proteomes" id="UP000001171">
    <property type="component" value="Chromosome"/>
</dbReference>
<dbReference type="GO" id="GO:0005886">
    <property type="term" value="C:plasma membrane"/>
    <property type="evidence" value="ECO:0007669"/>
    <property type="project" value="UniProtKB-SubCell"/>
</dbReference>
<dbReference type="GO" id="GO:0046872">
    <property type="term" value="F:metal ion binding"/>
    <property type="evidence" value="ECO:0007669"/>
    <property type="project" value="UniProtKB-KW"/>
</dbReference>
<dbReference type="GO" id="GO:0008963">
    <property type="term" value="F:phospho-N-acetylmuramoyl-pentapeptide-transferase activity"/>
    <property type="evidence" value="ECO:0007669"/>
    <property type="project" value="UniProtKB-UniRule"/>
</dbReference>
<dbReference type="GO" id="GO:0051992">
    <property type="term" value="F:UDP-N-acetylmuramoyl-L-alanyl-D-glutamyl-meso-2,6-diaminopimelyl-D-alanyl-D-alanine:undecaprenyl-phosphate transferase activity"/>
    <property type="evidence" value="ECO:0007669"/>
    <property type="project" value="RHEA"/>
</dbReference>
<dbReference type="GO" id="GO:0051301">
    <property type="term" value="P:cell division"/>
    <property type="evidence" value="ECO:0007669"/>
    <property type="project" value="UniProtKB-KW"/>
</dbReference>
<dbReference type="GO" id="GO:0071555">
    <property type="term" value="P:cell wall organization"/>
    <property type="evidence" value="ECO:0007669"/>
    <property type="project" value="UniProtKB-KW"/>
</dbReference>
<dbReference type="GO" id="GO:0009252">
    <property type="term" value="P:peptidoglycan biosynthetic process"/>
    <property type="evidence" value="ECO:0007669"/>
    <property type="project" value="UniProtKB-UniRule"/>
</dbReference>
<dbReference type="GO" id="GO:0008360">
    <property type="term" value="P:regulation of cell shape"/>
    <property type="evidence" value="ECO:0007669"/>
    <property type="project" value="UniProtKB-KW"/>
</dbReference>
<dbReference type="CDD" id="cd06852">
    <property type="entry name" value="GT_MraY"/>
    <property type="match status" value="1"/>
</dbReference>
<dbReference type="HAMAP" id="MF_00038">
    <property type="entry name" value="MraY"/>
    <property type="match status" value="1"/>
</dbReference>
<dbReference type="InterPro" id="IPR000715">
    <property type="entry name" value="Glycosyl_transferase_4"/>
</dbReference>
<dbReference type="InterPro" id="IPR003524">
    <property type="entry name" value="PNAcMuramoyl-5peptid_Trfase"/>
</dbReference>
<dbReference type="InterPro" id="IPR018480">
    <property type="entry name" value="PNAcMuramoyl-5peptid_Trfase_CS"/>
</dbReference>
<dbReference type="NCBIfam" id="TIGR00445">
    <property type="entry name" value="mraY"/>
    <property type="match status" value="1"/>
</dbReference>
<dbReference type="PANTHER" id="PTHR22926">
    <property type="entry name" value="PHOSPHO-N-ACETYLMURAMOYL-PENTAPEPTIDE-TRANSFERASE"/>
    <property type="match status" value="1"/>
</dbReference>
<dbReference type="PANTHER" id="PTHR22926:SF5">
    <property type="entry name" value="PHOSPHO-N-ACETYLMURAMOYL-PENTAPEPTIDE-TRANSFERASE HOMOLOG"/>
    <property type="match status" value="1"/>
</dbReference>
<dbReference type="Pfam" id="PF00953">
    <property type="entry name" value="Glycos_transf_4"/>
    <property type="match status" value="1"/>
</dbReference>
<dbReference type="Pfam" id="PF10555">
    <property type="entry name" value="MraY_sig1"/>
    <property type="match status" value="1"/>
</dbReference>
<dbReference type="PROSITE" id="PS01347">
    <property type="entry name" value="MRAY_1"/>
    <property type="match status" value="1"/>
</dbReference>
<dbReference type="PROSITE" id="PS01348">
    <property type="entry name" value="MRAY_2"/>
    <property type="match status" value="1"/>
</dbReference>
<keyword id="KW-0131">Cell cycle</keyword>
<keyword id="KW-0132">Cell division</keyword>
<keyword id="KW-0997">Cell inner membrane</keyword>
<keyword id="KW-1003">Cell membrane</keyword>
<keyword id="KW-0133">Cell shape</keyword>
<keyword id="KW-0961">Cell wall biogenesis/degradation</keyword>
<keyword id="KW-0460">Magnesium</keyword>
<keyword id="KW-0472">Membrane</keyword>
<keyword id="KW-0479">Metal-binding</keyword>
<keyword id="KW-0573">Peptidoglycan synthesis</keyword>
<keyword id="KW-1185">Reference proteome</keyword>
<keyword id="KW-0808">Transferase</keyword>
<keyword id="KW-0812">Transmembrane</keyword>
<keyword id="KW-1133">Transmembrane helix</keyword>
<gene>
    <name evidence="1" type="primary">mraY</name>
    <name type="ordered locus">IL0433</name>
</gene>
<name>MRAY_IDILO</name>